<feature type="chain" id="PRO_0000208658" description="Subtilisin inhibitor-like protein 1">
    <location>
        <begin position="1"/>
        <end position="110"/>
    </location>
</feature>
<feature type="site" description="Reactive bond" evidence="1">
    <location>
        <begin position="70"/>
        <end position="71"/>
    </location>
</feature>
<feature type="disulfide bond" evidence="1">
    <location>
        <begin position="30"/>
        <end position="44"/>
    </location>
</feature>
<feature type="disulfide bond" evidence="1">
    <location>
        <begin position="68"/>
        <end position="98"/>
    </location>
</feature>
<proteinExistence type="evidence at protein level"/>
<name>SSI1_STRCI</name>
<organism>
    <name type="scientific">Streptomyces cacaoi</name>
    <dbReference type="NCBI Taxonomy" id="1898"/>
    <lineage>
        <taxon>Bacteria</taxon>
        <taxon>Bacillati</taxon>
        <taxon>Actinomycetota</taxon>
        <taxon>Actinomycetes</taxon>
        <taxon>Kitasatosporales</taxon>
        <taxon>Streptomycetaceae</taxon>
        <taxon>Streptomyces</taxon>
    </lineage>
</organism>
<keyword id="KW-0903">Direct protein sequencing</keyword>
<keyword id="KW-1015">Disulfide bond</keyword>
<keyword id="KW-0646">Protease inhibitor</keyword>
<keyword id="KW-0964">Secreted</keyword>
<keyword id="KW-0722">Serine protease inhibitor</keyword>
<dbReference type="PIR" id="S47618">
    <property type="entry name" value="S47618"/>
</dbReference>
<dbReference type="SMR" id="P29606"/>
<dbReference type="MEROPS" id="I16.004"/>
<dbReference type="GO" id="GO:0005576">
    <property type="term" value="C:extracellular region"/>
    <property type="evidence" value="ECO:0007669"/>
    <property type="project" value="UniProtKB-SubCell"/>
</dbReference>
<dbReference type="GO" id="GO:0004867">
    <property type="term" value="F:serine-type endopeptidase inhibitor activity"/>
    <property type="evidence" value="ECO:0007669"/>
    <property type="project" value="UniProtKB-UniRule"/>
</dbReference>
<dbReference type="Gene3D" id="3.30.350.10">
    <property type="entry name" value="Subtilisin inhibitor-like"/>
    <property type="match status" value="1"/>
</dbReference>
<dbReference type="HAMAP" id="MF_00778">
    <property type="entry name" value="SSI"/>
    <property type="match status" value="1"/>
</dbReference>
<dbReference type="InterPro" id="IPR000691">
    <property type="entry name" value="Prot_inh_I16_SSI"/>
</dbReference>
<dbReference type="InterPro" id="IPR020054">
    <property type="entry name" value="Prot_inh_SSI_I16_CS"/>
</dbReference>
<dbReference type="InterPro" id="IPR023549">
    <property type="entry name" value="Subtilisin_inhibitor"/>
</dbReference>
<dbReference type="InterPro" id="IPR036819">
    <property type="entry name" value="Subtilisin_inhibitor-like_sf"/>
</dbReference>
<dbReference type="Pfam" id="PF00720">
    <property type="entry name" value="SSI"/>
    <property type="match status" value="1"/>
</dbReference>
<dbReference type="PRINTS" id="PR00294">
    <property type="entry name" value="SSBTLNINHBTR"/>
</dbReference>
<dbReference type="SUPFAM" id="SSF55399">
    <property type="entry name" value="Subtilisin inhibitor"/>
    <property type="match status" value="1"/>
</dbReference>
<dbReference type="PROSITE" id="PS00999">
    <property type="entry name" value="SSI"/>
    <property type="match status" value="1"/>
</dbReference>
<reference key="1">
    <citation type="journal article" date="1994" name="Biochim. Biophys. Acta">
        <title>Primary structure and inhibitory properties of a proteinase inhibitor produced by Streptomyces cacaoi.</title>
        <authorList>
            <person name="Kojima S."/>
            <person name="Terabe M."/>
            <person name="Taguchi S."/>
            <person name="Momose H."/>
            <person name="Miura K."/>
        </authorList>
    </citation>
    <scope>PROTEIN SEQUENCE</scope>
    <source>
        <strain>KCC S-0358</strain>
    </source>
</reference>
<reference key="2">
    <citation type="journal article" date="1992" name="FEMS Microbiol. Lett.">
        <title>Isolation and partial characterization of SSI-like protease inhibitors from Streptomyces.</title>
        <authorList>
            <person name="Taguchi S."/>
            <person name="Kojima S."/>
            <person name="Kumagai I."/>
            <person name="Ogawara H."/>
            <person name="Miura K."/>
            <person name="Momose H."/>
        </authorList>
    </citation>
    <scope>PRELIMINARY PROTEIN SEQUENCE OF 1-35</scope>
    <source>
        <strain>KCC S-0358</strain>
    </source>
</reference>
<reference key="3">
    <citation type="journal article" date="1993" name="Biosci. Biotechnol. Biochem.">
        <title>High frequency of SSI-like protease inhibitors among Streptomyces.</title>
        <authorList>
            <person name="Taguchi S."/>
            <person name="Kikuchi H."/>
            <person name="Kojima S."/>
            <person name="Kumagai I."/>
            <person name="Nakase T."/>
            <person name="Miura K."/>
            <person name="Momose H."/>
        </authorList>
    </citation>
    <scope>PRELIMINARY PROTEIN SEQUENCE OF 1-35</scope>
    <source>
        <strain>KCC S-0358</strain>
    </source>
</reference>
<protein>
    <recommendedName>
        <fullName>Subtilisin inhibitor-like protein 1</fullName>
        <shortName>SIL-1</shortName>
        <shortName>SIL1</shortName>
    </recommendedName>
</protein>
<accession>P29606</accession>
<comment type="function">
    <text>Strong inhibitor of subtilisin BPN'.</text>
</comment>
<comment type="subunit">
    <text evidence="1">Homodimer.</text>
</comment>
<comment type="subcellular location">
    <subcellularLocation>
        <location>Secreted</location>
    </subcellularLocation>
</comment>
<comment type="similarity">
    <text evidence="2">Belongs to the protease inhibitor I16 (SSI) family.</text>
</comment>
<evidence type="ECO:0000250" key="1"/>
<evidence type="ECO:0000305" key="2"/>
<sequence>SLYAPSAVVISKTQGASADAPAQRAVTLRCLPVGGDHPAPEKACAALREAGGDPAALPRYVEDTGRVCTREYRPVTVSVQGVWDGRRIDHAQTFSNSCELEKQTASVYAF</sequence>